<comment type="function">
    <text evidence="2">Plays a role in the nuclear pore complex (NPC) assembly and maintenance, but with limited role in NPC permeability. Required for specific nuclear import pathways such as Mad import.</text>
</comment>
<comment type="subunit">
    <text evidence="1">Part of the nuclear pore complex (NPC).</text>
</comment>
<comment type="subcellular location">
    <subcellularLocation>
        <location evidence="1">Nucleus</location>
        <location evidence="1">Nuclear pore complex</location>
    </subcellularLocation>
</comment>
<comment type="alternative products">
    <event type="alternative splicing"/>
    <isoform>
        <id>Q8IQV9-1</id>
        <name evidence="7">B</name>
        <sequence type="displayed"/>
    </isoform>
    <isoform>
        <id>Q8IQV9-2</id>
        <name evidence="7">A</name>
        <sequence type="described" ref="VSP_059518"/>
    </isoform>
</comment>
<comment type="similarity">
    <text evidence="3">Belongs to the NUP186/NUP192/NUP205 family.</text>
</comment>
<comment type="sequence caution" evidence="3">
    <conflict type="erroneous initiation">
        <sequence resource="EMBL-CDS" id="AAM49917"/>
    </conflict>
    <text>Truncated N-terminus.</text>
</comment>
<comment type="sequence caution" evidence="3">
    <conflict type="frameshift">
        <sequence resource="EMBL-CDS" id="AAM49917"/>
    </conflict>
</comment>
<comment type="sequence caution" evidence="3">
    <conflict type="frameshift">
        <sequence resource="EMBL-CDS" id="ACI88735"/>
    </conflict>
</comment>
<accession>Q8IQV9</accession>
<accession>B6IDH1</accession>
<accession>Q3YMV0</accession>
<accession>Q8MSV6</accession>
<accession>Q9VWB8</accession>
<gene>
    <name evidence="7" type="primary">Nup205</name>
    <name evidence="7" type="ORF">CG11943</name>
</gene>
<name>NU205_DROME</name>
<keyword id="KW-0025">Alternative splicing</keyword>
<keyword id="KW-0509">mRNA transport</keyword>
<keyword id="KW-0906">Nuclear pore complex</keyword>
<keyword id="KW-0539">Nucleus</keyword>
<keyword id="KW-0653">Protein transport</keyword>
<keyword id="KW-1185">Reference proteome</keyword>
<keyword id="KW-0811">Translocation</keyword>
<keyword id="KW-0813">Transport</keyword>
<organism evidence="8">
    <name type="scientific">Drosophila melanogaster</name>
    <name type="common">Fruit fly</name>
    <dbReference type="NCBI Taxonomy" id="7227"/>
    <lineage>
        <taxon>Eukaryota</taxon>
        <taxon>Metazoa</taxon>
        <taxon>Ecdysozoa</taxon>
        <taxon>Arthropoda</taxon>
        <taxon>Hexapoda</taxon>
        <taxon>Insecta</taxon>
        <taxon>Pterygota</taxon>
        <taxon>Neoptera</taxon>
        <taxon>Endopterygota</taxon>
        <taxon>Diptera</taxon>
        <taxon>Brachycera</taxon>
        <taxon>Muscomorpha</taxon>
        <taxon>Ephydroidea</taxon>
        <taxon>Drosophilidae</taxon>
        <taxon>Drosophila</taxon>
        <taxon>Sophophora</taxon>
    </lineage>
</organism>
<sequence length="2090" mass="235147">MDGECLANEQMCVGRQITNATHASTAVIEDMWTPYKHLYNTFQTAVSNRSGFTSDLEQCLKKYKHNFSNLLRNPPRSEKSRNLLRNALNEGVPMQGHSRKTKMSQDLADEAVILSDMFDLDEGFAVELLCTAQRQQKHHPGLSRGLVAVLLYYDGRKAISCTLRDMFQVVSGVSWNTELPKEITGLVTNYAESLVDGSGILGRLLQLLEEMDVDKECAMLTTNRAFGSKKHQNQVLGLYEDIQQALAMALFNWSAQRGLPRHIAIRLMHQLANRKNHDAGGNMDDVTLIMLMALLYAYDTSMLLVTEEPNEHTTRLPIFSDREFAECFLEELYAQSSWQAPRLNAIIAYSFGLTLASLRHAPLQLQATAISIINRDEMLIDEALGAQVFVFFHSLLLEKDLVYSTQFFYRRVHLLITDFIDFMNSKVSELRGRADESSHTIISFLNEGLEPPPNLDSNFELLMLCVAKMHGDPRVTIRLCNEYWGPGDPNGSTAFKNTSRSVSLFKFISLASDLLPQTLFKAYLKMISGLTRTDFSARCAFNMLRVPQMATGGKYAVSWDHFFTTLGNYYTSMRNDFNTNIGMSGETIYRTRSTPKAITQREAEHLVAVMGIIQAVAEHDEVSRIMICDHPNWQTPQVLLGLVACATPLFLKAEILHTLAALAKSKETARVIWFHLEASQIIPTVPVSRSYAQCSLLEEMEQIESRSEQYNLTRGILQLLYTLMTTNLPKSLGAGQRTPAYEGYLKSMINSVLLKFYNRAYKVPSEKWQVGAQCLKLLYYLLATYRPSAMDFLETVDEPPYPGFHVMMQLQLKSEMLQLLLCIVEEVRERLDNYNRFQGKKLLEECSLYALLILEAALAKQNAFFEAHSAANCPILLSGLNRMLLDLNPRSRKPDHVLNIIKYVTYNSWLPRHALAAIKILASVTQLPNVSTQILSMYGQGSNEKLEIRQGFVECLEMEVCVGKHDDDLLDQLALNNHVPYLGFGDDLDNEREMSGEREYSTIESQLELQAGDGALESKPASIELQLKEAIIKLFEMNLSQQLPNFVYFLLGVDVLREFMANGRQHLAIEMQSSCVNSVVLLLEKYMDKQRHSDKYCEHTARIVERIYHLFHGLCANRRTAETILRYFRLTCSDFLLRHLRSLPFRQHREDHVLHAMGHLLNCVSIDVKLAAKHGQMTRFNQMCDILLIGNGMERSSHGLSMELGHSLISQPSSSFLAMDVLPAGGSISAVAHGAGSASLGAPNTGVKSLKPSLLQETSQGLHVTRLLDILVLEAGTLSQPQLEFFDGHLITQLLRDCEASAEAGANSRANLINVRKLYYILTDELYMVQSIIASGQRKAISTEIMLLLNHAVNINRVRTQRCATLAFMAAWGQLVQVLFSNMPDAVLPATQRRQHIIDIVEKVLIKVQPIQPIIEISVQVSETVLLLLANLRYCCYQAEDQSPEDLAAEDSLSNGNGNAIGNDSQVNALCLGQRAIGTGSDGGSGGGRDIGSGGNSSNLRFILKNLVQWIMISEVKSQKLRINLYSSLLNCLRIAKRLRTDEHLEYQETLISRQESARTYNKEQRRDDRLRLKAMAAEVIGTFGEKLIDTICHDAVTGHDVCRMLALACLDMISELQAVSTLCDFVASRGYLKHILESLDQSSTALCGILQPVPDHLRPLYVYESRMAFLTRMANSNVGARLLLTEQALGVLSNMKVYDQQPDLKSSELNRNEPQTFLPSIDDRFRSILLPALSLCDAIVNSLGPRNNSAAVQVLNFLFAHIDMVEAMLRSATPYMDLGHLQQVAVISNLFARASTHELTALEDSVQLDLRNRLGRVQQLMIVVFGRFCVSEPTIRRMLQQDEEQQTNPTDDSKRLRVKYFLDIAANVSLYCRNVVTSHSKDSMTSKYLLTTVINDVTLLTGKMSSKKLTTIMHTILNQLKGSIGYYLSQKSIADNLLQQRASLPNISFGPNGKQSYIELSQRYNEKRSELRQAVFIAEQNLYLLWIHLDFYLRNTIDYANENRNAINESNMDDDNDMSVLNASQEEIVQLKQLLISTFNETFCTQLINASEDYSIKCKGFNGSLLRRIKALVQFAPITANDVNSSFDS</sequence>
<protein>
    <recommendedName>
        <fullName evidence="3">Nuclear pore complex protein Nup205</fullName>
    </recommendedName>
    <alternativeName>
        <fullName evidence="7">205 kDa nucleoporin</fullName>
    </alternativeName>
    <alternativeName>
        <fullName evidence="3">Nucleoporin Nup205</fullName>
    </alternativeName>
</protein>
<proteinExistence type="evidence at transcript level"/>
<feature type="chain" id="PRO_0000443734" description="Nuclear pore complex protein Nup205">
    <location>
        <begin position="1"/>
        <end position="2090"/>
    </location>
</feature>
<feature type="splice variant" id="VSP_059518" description="In isoform A.">
    <original>MDGECLANEQMCVGRQITNATHAST</original>
    <variation>MD</variation>
    <location>
        <begin position="1"/>
        <end position="25"/>
    </location>
</feature>
<feature type="sequence conflict" description="In Ref. 3; ACI88735." evidence="3" ref="3">
    <original>G</original>
    <variation>C</variation>
    <location>
        <position position="123"/>
    </location>
</feature>
<feature type="sequence conflict" description="In Ref. 3; ACI88735." evidence="3" ref="3">
    <original>E</original>
    <variation>G</variation>
    <location>
        <position position="307"/>
    </location>
</feature>
<feature type="sequence conflict" description="In Ref. 3; ACI88735." evidence="3" ref="3">
    <original>I</original>
    <variation>T</variation>
    <location>
        <position position="1503"/>
    </location>
</feature>
<dbReference type="EMBL" id="AE014298">
    <property type="protein sequence ID" value="AAN09521.1"/>
    <property type="molecule type" value="Genomic_DNA"/>
</dbReference>
<dbReference type="EMBL" id="AE014298">
    <property type="protein sequence ID" value="AAF49028.2"/>
    <property type="molecule type" value="Genomic_DNA"/>
</dbReference>
<dbReference type="EMBL" id="BT050409">
    <property type="protein sequence ID" value="ACI88735.1"/>
    <property type="status" value="ALT_FRAME"/>
    <property type="molecule type" value="mRNA"/>
</dbReference>
<dbReference type="EMBL" id="DQ062776">
    <property type="protein sequence ID" value="AAY56649.1"/>
    <property type="molecule type" value="mRNA"/>
</dbReference>
<dbReference type="EMBL" id="AY118548">
    <property type="protein sequence ID" value="AAM49917.1"/>
    <property type="status" value="ALT_SEQ"/>
    <property type="molecule type" value="mRNA"/>
</dbReference>
<dbReference type="RefSeq" id="NP_608362.2">
    <molecule id="Q8IQV9-2"/>
    <property type="nucleotide sequence ID" value="NM_134518.4"/>
</dbReference>
<dbReference type="RefSeq" id="NP_728308.1">
    <molecule id="Q8IQV9-1"/>
    <property type="nucleotide sequence ID" value="NM_167687.3"/>
</dbReference>
<dbReference type="SMR" id="Q8IQV9"/>
<dbReference type="ComplexPortal" id="CPX-2568">
    <property type="entry name" value="Nuclear pore complex"/>
</dbReference>
<dbReference type="FunCoup" id="Q8IQV9">
    <property type="interactions" value="2005"/>
</dbReference>
<dbReference type="IntAct" id="Q8IQV9">
    <property type="interactions" value="4"/>
</dbReference>
<dbReference type="MINT" id="Q8IQV9"/>
<dbReference type="STRING" id="7227.FBpp0074567"/>
<dbReference type="PaxDb" id="7227-FBpp0074567"/>
<dbReference type="EnsemblMetazoa" id="FBtr0074798">
    <molecule id="Q8IQV9-1"/>
    <property type="protein sequence ID" value="FBpp0074567"/>
    <property type="gene ID" value="FBgn0031078"/>
</dbReference>
<dbReference type="EnsemblMetazoa" id="FBtr0074799">
    <molecule id="Q8IQV9-2"/>
    <property type="protein sequence ID" value="FBpp0074568"/>
    <property type="gene ID" value="FBgn0031078"/>
</dbReference>
<dbReference type="GeneID" id="33002"/>
<dbReference type="KEGG" id="dme:Dmel_CG11943"/>
<dbReference type="UCSC" id="CG11943-RA">
    <property type="organism name" value="d. melanogaster"/>
</dbReference>
<dbReference type="UCSC" id="CG11943-RB">
    <molecule id="Q8IQV9-1"/>
    <property type="organism name" value="d. melanogaster"/>
</dbReference>
<dbReference type="AGR" id="FB:FBgn0031078"/>
<dbReference type="CTD" id="23165"/>
<dbReference type="FlyBase" id="FBgn0031078">
    <property type="gene designation" value="Nup205"/>
</dbReference>
<dbReference type="VEuPathDB" id="VectorBase:FBgn0031078"/>
<dbReference type="eggNOG" id="KOG1835">
    <property type="taxonomic scope" value="Eukaryota"/>
</dbReference>
<dbReference type="GeneTree" id="ENSGT00390000004003"/>
<dbReference type="InParanoid" id="Q8IQV9"/>
<dbReference type="OMA" id="WSQMFAE"/>
<dbReference type="OrthoDB" id="2019644at2759"/>
<dbReference type="PhylomeDB" id="Q8IQV9"/>
<dbReference type="Reactome" id="R-DME-159227">
    <property type="pathway name" value="Transport of the SLBP independent Mature mRNA"/>
</dbReference>
<dbReference type="Reactome" id="R-DME-159230">
    <property type="pathway name" value="Transport of the SLBP Dependant Mature mRNA"/>
</dbReference>
<dbReference type="Reactome" id="R-DME-159231">
    <property type="pathway name" value="Transport of Mature mRNA Derived from an Intronless Transcript"/>
</dbReference>
<dbReference type="Reactome" id="R-DME-159236">
    <property type="pathway name" value="Transport of Mature mRNA derived from an Intron-Containing Transcript"/>
</dbReference>
<dbReference type="Reactome" id="R-DME-3108214">
    <property type="pathway name" value="SUMOylation of DNA damage response and repair proteins"/>
</dbReference>
<dbReference type="Reactome" id="R-DME-3301854">
    <property type="pathway name" value="Nuclear Pore Complex (NPC) Disassembly"/>
</dbReference>
<dbReference type="Reactome" id="R-DME-4085377">
    <property type="pathway name" value="SUMOylation of SUMOylation proteins"/>
</dbReference>
<dbReference type="Reactome" id="R-DME-4551638">
    <property type="pathway name" value="SUMOylation of chromatin organization proteins"/>
</dbReference>
<dbReference type="Reactome" id="R-DME-4615885">
    <property type="pathway name" value="SUMOylation of DNA replication proteins"/>
</dbReference>
<dbReference type="Reactome" id="R-DME-5578749">
    <property type="pathway name" value="Transcriptional regulation by small RNAs"/>
</dbReference>
<dbReference type="Reactome" id="R-DME-9615933">
    <property type="pathway name" value="Postmitotic nuclear pore complex (NPC) reformation"/>
</dbReference>
<dbReference type="SignaLink" id="Q8IQV9"/>
<dbReference type="BioGRID-ORCS" id="33002">
    <property type="hits" value="0 hits in 1 CRISPR screen"/>
</dbReference>
<dbReference type="GenomeRNAi" id="33002"/>
<dbReference type="PRO" id="PR:Q8IQV9"/>
<dbReference type="Proteomes" id="UP000000803">
    <property type="component" value="Chromosome X"/>
</dbReference>
<dbReference type="Bgee" id="FBgn0031078">
    <property type="expression patterns" value="Expressed in eye disc (Drosophila) and 56 other cell types or tissues"/>
</dbReference>
<dbReference type="ExpressionAtlas" id="Q8IQV9">
    <property type="expression patterns" value="baseline and differential"/>
</dbReference>
<dbReference type="GO" id="GO:0044611">
    <property type="term" value="C:nuclear pore inner ring"/>
    <property type="evidence" value="ECO:0000250"/>
    <property type="project" value="FlyBase"/>
</dbReference>
<dbReference type="GO" id="GO:0017056">
    <property type="term" value="F:structural constituent of nuclear pore"/>
    <property type="evidence" value="ECO:0000250"/>
    <property type="project" value="FlyBase"/>
</dbReference>
<dbReference type="GO" id="GO:0042332">
    <property type="term" value="P:gravitaxis"/>
    <property type="evidence" value="ECO:0000315"/>
    <property type="project" value="FlyBase"/>
</dbReference>
<dbReference type="GO" id="GO:0051028">
    <property type="term" value="P:mRNA transport"/>
    <property type="evidence" value="ECO:0007669"/>
    <property type="project" value="UniProtKB-KW"/>
</dbReference>
<dbReference type="GO" id="GO:0006999">
    <property type="term" value="P:nuclear pore organization"/>
    <property type="evidence" value="ECO:0000250"/>
    <property type="project" value="FlyBase"/>
</dbReference>
<dbReference type="GO" id="GO:0006606">
    <property type="term" value="P:protein import into nucleus"/>
    <property type="evidence" value="ECO:0000315"/>
    <property type="project" value="FlyBase"/>
</dbReference>
<dbReference type="InterPro" id="IPR021827">
    <property type="entry name" value="Nup186/Nup192/Nup205"/>
</dbReference>
<dbReference type="PANTHER" id="PTHR31344">
    <property type="entry name" value="NUCLEAR PORE COMPLEX PROTEIN NUP205"/>
    <property type="match status" value="1"/>
</dbReference>
<dbReference type="PANTHER" id="PTHR31344:SF0">
    <property type="entry name" value="NUCLEAR PORE COMPLEX PROTEIN NUP205"/>
    <property type="match status" value="1"/>
</dbReference>
<dbReference type="Pfam" id="PF11894">
    <property type="entry name" value="Nup192"/>
    <property type="match status" value="1"/>
</dbReference>
<reference evidence="8" key="1">
    <citation type="journal article" date="2000" name="Science">
        <title>The genome sequence of Drosophila melanogaster.</title>
        <authorList>
            <person name="Adams M.D."/>
            <person name="Celniker S.E."/>
            <person name="Holt R.A."/>
            <person name="Evans C.A."/>
            <person name="Gocayne J.D."/>
            <person name="Amanatides P.G."/>
            <person name="Scherer S.E."/>
            <person name="Li P.W."/>
            <person name="Hoskins R.A."/>
            <person name="Galle R.F."/>
            <person name="George R.A."/>
            <person name="Lewis S.E."/>
            <person name="Richards S."/>
            <person name="Ashburner M."/>
            <person name="Henderson S.N."/>
            <person name="Sutton G.G."/>
            <person name="Wortman J.R."/>
            <person name="Yandell M.D."/>
            <person name="Zhang Q."/>
            <person name="Chen L.X."/>
            <person name="Brandon R.C."/>
            <person name="Rogers Y.-H.C."/>
            <person name="Blazej R.G."/>
            <person name="Champe M."/>
            <person name="Pfeiffer B.D."/>
            <person name="Wan K.H."/>
            <person name="Doyle C."/>
            <person name="Baxter E.G."/>
            <person name="Helt G."/>
            <person name="Nelson C.R."/>
            <person name="Miklos G.L.G."/>
            <person name="Abril J.F."/>
            <person name="Agbayani A."/>
            <person name="An H.-J."/>
            <person name="Andrews-Pfannkoch C."/>
            <person name="Baldwin D."/>
            <person name="Ballew R.M."/>
            <person name="Basu A."/>
            <person name="Baxendale J."/>
            <person name="Bayraktaroglu L."/>
            <person name="Beasley E.M."/>
            <person name="Beeson K.Y."/>
            <person name="Benos P.V."/>
            <person name="Berman B.P."/>
            <person name="Bhandari D."/>
            <person name="Bolshakov S."/>
            <person name="Borkova D."/>
            <person name="Botchan M.R."/>
            <person name="Bouck J."/>
            <person name="Brokstein P."/>
            <person name="Brottier P."/>
            <person name="Burtis K.C."/>
            <person name="Busam D.A."/>
            <person name="Butler H."/>
            <person name="Cadieu E."/>
            <person name="Center A."/>
            <person name="Chandra I."/>
            <person name="Cherry J.M."/>
            <person name="Cawley S."/>
            <person name="Dahlke C."/>
            <person name="Davenport L.B."/>
            <person name="Davies P."/>
            <person name="de Pablos B."/>
            <person name="Delcher A."/>
            <person name="Deng Z."/>
            <person name="Mays A.D."/>
            <person name="Dew I."/>
            <person name="Dietz S.M."/>
            <person name="Dodson K."/>
            <person name="Doup L.E."/>
            <person name="Downes M."/>
            <person name="Dugan-Rocha S."/>
            <person name="Dunkov B.C."/>
            <person name="Dunn P."/>
            <person name="Durbin K.J."/>
            <person name="Evangelista C.C."/>
            <person name="Ferraz C."/>
            <person name="Ferriera S."/>
            <person name="Fleischmann W."/>
            <person name="Fosler C."/>
            <person name="Gabrielian A.E."/>
            <person name="Garg N.S."/>
            <person name="Gelbart W.M."/>
            <person name="Glasser K."/>
            <person name="Glodek A."/>
            <person name="Gong F."/>
            <person name="Gorrell J.H."/>
            <person name="Gu Z."/>
            <person name="Guan P."/>
            <person name="Harris M."/>
            <person name="Harris N.L."/>
            <person name="Harvey D.A."/>
            <person name="Heiman T.J."/>
            <person name="Hernandez J.R."/>
            <person name="Houck J."/>
            <person name="Hostin D."/>
            <person name="Houston K.A."/>
            <person name="Howland T.J."/>
            <person name="Wei M.-H."/>
            <person name="Ibegwam C."/>
            <person name="Jalali M."/>
            <person name="Kalush F."/>
            <person name="Karpen G.H."/>
            <person name="Ke Z."/>
            <person name="Kennison J.A."/>
            <person name="Ketchum K.A."/>
            <person name="Kimmel B.E."/>
            <person name="Kodira C.D."/>
            <person name="Kraft C.L."/>
            <person name="Kravitz S."/>
            <person name="Kulp D."/>
            <person name="Lai Z."/>
            <person name="Lasko P."/>
            <person name="Lei Y."/>
            <person name="Levitsky A.A."/>
            <person name="Li J.H."/>
            <person name="Li Z."/>
            <person name="Liang Y."/>
            <person name="Lin X."/>
            <person name="Liu X."/>
            <person name="Mattei B."/>
            <person name="McIntosh T.C."/>
            <person name="McLeod M.P."/>
            <person name="McPherson D."/>
            <person name="Merkulov G."/>
            <person name="Milshina N.V."/>
            <person name="Mobarry C."/>
            <person name="Morris J."/>
            <person name="Moshrefi A."/>
            <person name="Mount S.M."/>
            <person name="Moy M."/>
            <person name="Murphy B."/>
            <person name="Murphy L."/>
            <person name="Muzny D.M."/>
            <person name="Nelson D.L."/>
            <person name="Nelson D.R."/>
            <person name="Nelson K.A."/>
            <person name="Nixon K."/>
            <person name="Nusskern D.R."/>
            <person name="Pacleb J.M."/>
            <person name="Palazzolo M."/>
            <person name="Pittman G.S."/>
            <person name="Pan S."/>
            <person name="Pollard J."/>
            <person name="Puri V."/>
            <person name="Reese M.G."/>
            <person name="Reinert K."/>
            <person name="Remington K."/>
            <person name="Saunders R.D.C."/>
            <person name="Scheeler F."/>
            <person name="Shen H."/>
            <person name="Shue B.C."/>
            <person name="Siden-Kiamos I."/>
            <person name="Simpson M."/>
            <person name="Skupski M.P."/>
            <person name="Smith T.J."/>
            <person name="Spier E."/>
            <person name="Spradling A.C."/>
            <person name="Stapleton M."/>
            <person name="Strong R."/>
            <person name="Sun E."/>
            <person name="Svirskas R."/>
            <person name="Tector C."/>
            <person name="Turner R."/>
            <person name="Venter E."/>
            <person name="Wang A.H."/>
            <person name="Wang X."/>
            <person name="Wang Z.-Y."/>
            <person name="Wassarman D.A."/>
            <person name="Weinstock G.M."/>
            <person name="Weissenbach J."/>
            <person name="Williams S.M."/>
            <person name="Woodage T."/>
            <person name="Worley K.C."/>
            <person name="Wu D."/>
            <person name="Yang S."/>
            <person name="Yao Q.A."/>
            <person name="Ye J."/>
            <person name="Yeh R.-F."/>
            <person name="Zaveri J.S."/>
            <person name="Zhan M."/>
            <person name="Zhang G."/>
            <person name="Zhao Q."/>
            <person name="Zheng L."/>
            <person name="Zheng X.H."/>
            <person name="Zhong F.N."/>
            <person name="Zhong W."/>
            <person name="Zhou X."/>
            <person name="Zhu S.C."/>
            <person name="Zhu X."/>
            <person name="Smith H.O."/>
            <person name="Gibbs R.A."/>
            <person name="Myers E.W."/>
            <person name="Rubin G.M."/>
            <person name="Venter J.C."/>
        </authorList>
    </citation>
    <scope>NUCLEOTIDE SEQUENCE [LARGE SCALE GENOMIC DNA]</scope>
    <source>
        <strain evidence="8">Berkeley</strain>
    </source>
</reference>
<reference evidence="8" key="2">
    <citation type="journal article" date="2002" name="Genome Biol.">
        <title>Annotation of the Drosophila melanogaster euchromatic genome: a systematic review.</title>
        <authorList>
            <person name="Misra S."/>
            <person name="Crosby M.A."/>
            <person name="Mungall C.J."/>
            <person name="Matthews B.B."/>
            <person name="Campbell K.S."/>
            <person name="Hradecky P."/>
            <person name="Huang Y."/>
            <person name="Kaminker J.S."/>
            <person name="Millburn G.H."/>
            <person name="Prochnik S.E."/>
            <person name="Smith C.D."/>
            <person name="Tupy J.L."/>
            <person name="Whitfield E.J."/>
            <person name="Bayraktaroglu L."/>
            <person name="Berman B.P."/>
            <person name="Bettencourt B.R."/>
            <person name="Celniker S.E."/>
            <person name="de Grey A.D.N.J."/>
            <person name="Drysdale R.A."/>
            <person name="Harris N.L."/>
            <person name="Richter J."/>
            <person name="Russo S."/>
            <person name="Schroeder A.J."/>
            <person name="Shu S.Q."/>
            <person name="Stapleton M."/>
            <person name="Yamada C."/>
            <person name="Ashburner M."/>
            <person name="Gelbart W.M."/>
            <person name="Rubin G.M."/>
            <person name="Lewis S.E."/>
        </authorList>
    </citation>
    <scope>GENOME REANNOTATION</scope>
    <source>
        <strain evidence="8">Berkeley</strain>
    </source>
</reference>
<reference evidence="6" key="3">
    <citation type="submission" date="2008-10" db="EMBL/GenBank/DDBJ databases">
        <authorList>
            <person name="Carlson J."/>
            <person name="Booth B."/>
            <person name="Frise E."/>
            <person name="Park S."/>
            <person name="Wan K."/>
            <person name="Yu C."/>
            <person name="Celniker S."/>
        </authorList>
    </citation>
    <scope>NUCLEOTIDE SEQUENCE [LARGE SCALE MRNA] (ISOFORM A)</scope>
    <source>
        <strain evidence="6">Berkeley</strain>
        <tissue evidence="6">Embryo</tissue>
    </source>
</reference>
<reference evidence="5" key="4">
    <citation type="journal article" date="2005" name="Mol. Biol. Evol.">
        <title>Rapidly evolving genes of Drosophila: differing levels of selective pressure in testis, ovary, and head tissues between sibling species.</title>
        <authorList>
            <person name="Jagadeeshan S."/>
            <person name="Singh R.S."/>
        </authorList>
    </citation>
    <scope>NUCLEOTIDE SEQUENCE [MRNA] OF 1-787 (ISOFORM B)</scope>
    <source>
        <tissue evidence="5">Ovary</tissue>
    </source>
</reference>
<reference evidence="4" key="5">
    <citation type="journal article" date="2002" name="Genome Biol.">
        <title>A Drosophila full-length cDNA resource.</title>
        <authorList>
            <person name="Stapleton M."/>
            <person name="Carlson J.W."/>
            <person name="Brokstein P."/>
            <person name="Yu C."/>
            <person name="Champe M."/>
            <person name="George R.A."/>
            <person name="Guarin H."/>
            <person name="Kronmiller B."/>
            <person name="Pacleb J.M."/>
            <person name="Park S."/>
            <person name="Wan K.H."/>
            <person name="Rubin G.M."/>
            <person name="Celniker S.E."/>
        </authorList>
    </citation>
    <scope>NUCLEOTIDE SEQUENCE [LARGE SCALE MRNA] OF 176-2090 (ISOFORM A/B)</scope>
    <source>
        <strain>Berkeley</strain>
        <tissue>Embryo</tissue>
    </source>
</reference>
<reference evidence="3" key="6">
    <citation type="journal article" date="2010" name="Mol. Cell. Biol.">
        <title>Specific nucleoporin requirement for Smad nuclear translocation.</title>
        <authorList>
            <person name="Chen X."/>
            <person name="Xu L."/>
        </authorList>
    </citation>
    <scope>FUNCTION</scope>
</reference>
<evidence type="ECO:0000250" key="1">
    <source>
        <dbReference type="UniProtKB" id="Q92621"/>
    </source>
</evidence>
<evidence type="ECO:0000269" key="2">
    <source>
    </source>
</evidence>
<evidence type="ECO:0000305" key="3"/>
<evidence type="ECO:0000312" key="4">
    <source>
        <dbReference type="EMBL" id="AAM49917.1"/>
    </source>
</evidence>
<evidence type="ECO:0000312" key="5">
    <source>
        <dbReference type="EMBL" id="AAY56649.1"/>
    </source>
</evidence>
<evidence type="ECO:0000312" key="6">
    <source>
        <dbReference type="EMBL" id="ACI88735.1"/>
    </source>
</evidence>
<evidence type="ECO:0000312" key="7">
    <source>
        <dbReference type="FlyBase" id="FBgn0031078"/>
    </source>
</evidence>
<evidence type="ECO:0000312" key="8">
    <source>
        <dbReference type="Proteomes" id="UP000000803"/>
    </source>
</evidence>